<evidence type="ECO:0000256" key="1">
    <source>
        <dbReference type="SAM" id="MobiDB-lite"/>
    </source>
</evidence>
<evidence type="ECO:0000305" key="2"/>
<feature type="chain" id="PRO_0000428457" description="Uncharacterized tRNA/rRNA methyltransferase MT0904">
    <location>
        <begin position="1"/>
        <end position="288"/>
    </location>
</feature>
<feature type="region of interest" description="Disordered" evidence="1">
    <location>
        <begin position="1"/>
        <end position="20"/>
    </location>
</feature>
<feature type="compositionally biased region" description="Basic and acidic residues" evidence="1">
    <location>
        <begin position="1"/>
        <end position="12"/>
    </location>
</feature>
<accession>P9WFY2</accession>
<accession>L0T6Q0</accession>
<accession>Q10543</accession>
<organism>
    <name type="scientific">Mycobacterium tuberculosis (strain CDC 1551 / Oshkosh)</name>
    <dbReference type="NCBI Taxonomy" id="83331"/>
    <lineage>
        <taxon>Bacteria</taxon>
        <taxon>Bacillati</taxon>
        <taxon>Actinomycetota</taxon>
        <taxon>Actinomycetes</taxon>
        <taxon>Mycobacteriales</taxon>
        <taxon>Mycobacteriaceae</taxon>
        <taxon>Mycobacterium</taxon>
        <taxon>Mycobacterium tuberculosis complex</taxon>
    </lineage>
</organism>
<name>Y881_MYCTO</name>
<comment type="similarity">
    <text evidence="2">Belongs to the class IV-like SAM-binding methyltransferase superfamily. RNA methyltransferase TrmH family.</text>
</comment>
<comment type="sequence caution" evidence="2">
    <conflict type="erroneous initiation">
        <sequence resource="EMBL-CDS" id="AAK45146"/>
    </conflict>
</comment>
<keyword id="KW-0489">Methyltransferase</keyword>
<keyword id="KW-1185">Reference proteome</keyword>
<keyword id="KW-0808">Transferase</keyword>
<gene>
    <name type="ordered locus">MT0904</name>
</gene>
<dbReference type="EC" id="2.1.1.-"/>
<dbReference type="EMBL" id="AE000516">
    <property type="protein sequence ID" value="AAK45146.1"/>
    <property type="status" value="ALT_INIT"/>
    <property type="molecule type" value="Genomic_DNA"/>
</dbReference>
<dbReference type="PIR" id="F70780">
    <property type="entry name" value="F70780"/>
</dbReference>
<dbReference type="RefSeq" id="WP_003404610.1">
    <property type="nucleotide sequence ID" value="NZ_KK341227.1"/>
</dbReference>
<dbReference type="SMR" id="P9WFY2"/>
<dbReference type="KEGG" id="mtc:MT0904"/>
<dbReference type="PATRIC" id="fig|83331.31.peg.971"/>
<dbReference type="HOGENOM" id="CLU_021322_3_3_11"/>
<dbReference type="Proteomes" id="UP000001020">
    <property type="component" value="Chromosome"/>
</dbReference>
<dbReference type="GO" id="GO:0003723">
    <property type="term" value="F:RNA binding"/>
    <property type="evidence" value="ECO:0007669"/>
    <property type="project" value="InterPro"/>
</dbReference>
<dbReference type="GO" id="GO:0008173">
    <property type="term" value="F:RNA methyltransferase activity"/>
    <property type="evidence" value="ECO:0007669"/>
    <property type="project" value="InterPro"/>
</dbReference>
<dbReference type="GO" id="GO:0032259">
    <property type="term" value="P:methylation"/>
    <property type="evidence" value="ECO:0007669"/>
    <property type="project" value="UniProtKB-KW"/>
</dbReference>
<dbReference type="GO" id="GO:0006396">
    <property type="term" value="P:RNA processing"/>
    <property type="evidence" value="ECO:0007669"/>
    <property type="project" value="InterPro"/>
</dbReference>
<dbReference type="CDD" id="cd18095">
    <property type="entry name" value="SpoU-like_rRNA-MTase"/>
    <property type="match status" value="1"/>
</dbReference>
<dbReference type="Gene3D" id="3.40.1280.10">
    <property type="match status" value="1"/>
</dbReference>
<dbReference type="InterPro" id="IPR029028">
    <property type="entry name" value="Alpha/beta_knot_MTases"/>
</dbReference>
<dbReference type="InterPro" id="IPR029064">
    <property type="entry name" value="Ribosomal_eL30-like_sf"/>
</dbReference>
<dbReference type="InterPro" id="IPR051259">
    <property type="entry name" value="rRNA_Methyltransferase"/>
</dbReference>
<dbReference type="InterPro" id="IPR001537">
    <property type="entry name" value="SpoU_MeTrfase"/>
</dbReference>
<dbReference type="InterPro" id="IPR029026">
    <property type="entry name" value="tRNA_m1G_MTases_N"/>
</dbReference>
<dbReference type="PANTHER" id="PTHR43191:SF12">
    <property type="entry name" value="RRNA METHYLASE"/>
    <property type="match status" value="1"/>
</dbReference>
<dbReference type="PANTHER" id="PTHR43191">
    <property type="entry name" value="RRNA METHYLTRANSFERASE 3"/>
    <property type="match status" value="1"/>
</dbReference>
<dbReference type="Pfam" id="PF00588">
    <property type="entry name" value="SpoU_methylase"/>
    <property type="match status" value="1"/>
</dbReference>
<dbReference type="SUPFAM" id="SSF75217">
    <property type="entry name" value="alpha/beta knot"/>
    <property type="match status" value="1"/>
</dbReference>
<dbReference type="SUPFAM" id="SSF55315">
    <property type="entry name" value="L30e-like"/>
    <property type="match status" value="1"/>
</dbReference>
<reference key="1">
    <citation type="journal article" date="2002" name="J. Bacteriol.">
        <title>Whole-genome comparison of Mycobacterium tuberculosis clinical and laboratory strains.</title>
        <authorList>
            <person name="Fleischmann R.D."/>
            <person name="Alland D."/>
            <person name="Eisen J.A."/>
            <person name="Carpenter L."/>
            <person name="White O."/>
            <person name="Peterson J.D."/>
            <person name="DeBoy R.T."/>
            <person name="Dodson R.J."/>
            <person name="Gwinn M.L."/>
            <person name="Haft D.H."/>
            <person name="Hickey E.K."/>
            <person name="Kolonay J.F."/>
            <person name="Nelson W.C."/>
            <person name="Umayam L.A."/>
            <person name="Ermolaeva M.D."/>
            <person name="Salzberg S.L."/>
            <person name="Delcher A."/>
            <person name="Utterback T.R."/>
            <person name="Weidman J.F."/>
            <person name="Khouri H.M."/>
            <person name="Gill J."/>
            <person name="Mikula A."/>
            <person name="Bishai W."/>
            <person name="Jacobs W.R. Jr."/>
            <person name="Venter J.C."/>
            <person name="Fraser C.M."/>
        </authorList>
    </citation>
    <scope>NUCLEOTIDE SEQUENCE [LARGE SCALE GENOMIC DNA]</scope>
    <source>
        <strain>CDC 1551 / Oshkosh</strain>
    </source>
</reference>
<protein>
    <recommendedName>
        <fullName>Uncharacterized tRNA/rRNA methyltransferase MT0904</fullName>
        <ecNumber>2.1.1.-</ecNumber>
    </recommendedName>
</protein>
<sequence>MTEGRCAQHPDGLDVQDVCDPDDPRLDDFRDLNSIDRRPDLPTGKALVIAEGVLVVQRMLASRFTPLALFGTDRRLAELKDDLAGVGAPYYRASADVMARVIGFHLNRGVLAAARRVPEPSVAQVVAGARTVAVLEGVNDHENLGSIFRNAAGLSVDAVVFGTGCADPLYRRAVRVSMGHALLVPYARAADWPTELMTLKESGFRLLAMTPHGNACKLPEAIAAVSHERIALLVGAEGPGLTAAALRISDVRVRIPMSRGTDSLNVATAAALAFYERTRSGHHIGPGT</sequence>
<proteinExistence type="inferred from homology"/>